<gene>
    <name type="primary">RHBG</name>
</gene>
<protein>
    <recommendedName>
        <fullName>Ammonium transporter Rh type B</fullName>
    </recommendedName>
    <alternativeName>
        <fullName>Rhesus blood group family type B glycoprotein</fullName>
        <shortName>Rh family type B glycoprotein</shortName>
        <shortName>Rh type B glycoprotein</shortName>
    </alternativeName>
</protein>
<comment type="function">
    <text evidence="2">Ammonium transporter involved in the maintenance of acid-base homeostasis. Transports ammonium and its related derivative methylammonium across the basolateral plasma membrane of epithelial cells likely contributing to renal transepithelial ammonia transport and ammonia metabolism. May transport either NH4(+) or NH3 ammonia species predominantly mediating an electrogenic NH4(+) transport (By similarity). May act as a CO2 channel providing for renal acid secretion (By similarity).</text>
</comment>
<comment type="catalytic activity">
    <reaction evidence="2">
        <text>NH4(+)(in) = NH4(+)(out)</text>
        <dbReference type="Rhea" id="RHEA:28747"/>
        <dbReference type="ChEBI" id="CHEBI:28938"/>
    </reaction>
    <physiologicalReaction direction="left-to-right" evidence="2">
        <dbReference type="Rhea" id="RHEA:28748"/>
    </physiologicalReaction>
    <physiologicalReaction direction="right-to-left" evidence="2">
        <dbReference type="Rhea" id="RHEA:28749"/>
    </physiologicalReaction>
</comment>
<comment type="catalytic activity">
    <reaction evidence="2">
        <text>methylamine(out) = methylamine(in)</text>
        <dbReference type="Rhea" id="RHEA:74391"/>
        <dbReference type="ChEBI" id="CHEBI:59338"/>
    </reaction>
    <physiologicalReaction direction="left-to-right" evidence="2">
        <dbReference type="Rhea" id="RHEA:74392"/>
    </physiologicalReaction>
</comment>
<comment type="catalytic activity">
    <reaction evidence="2">
        <text>CO2(out) = CO2(in)</text>
        <dbReference type="Rhea" id="RHEA:74891"/>
        <dbReference type="ChEBI" id="CHEBI:16526"/>
    </reaction>
    <physiologicalReaction direction="left-to-right" evidence="2">
        <dbReference type="Rhea" id="RHEA:74892"/>
    </physiologicalReaction>
</comment>
<comment type="subunit">
    <text evidence="2">Interacts (via C-terminus) with ANK2 and ANK3; required for targeting to the basolateral membrane.</text>
</comment>
<comment type="subcellular location">
    <subcellularLocation>
        <location evidence="2">Cell membrane</location>
        <topology evidence="2">Multi-pass membrane protein</topology>
    </subcellularLocation>
    <subcellularLocation>
        <location evidence="2">Basolateral cell membrane</location>
        <topology evidence="3">Multi-pass membrane protein</topology>
    </subcellularLocation>
</comment>
<comment type="PTM">
    <text evidence="1">N-glycosylated.</text>
</comment>
<comment type="similarity">
    <text evidence="5">Belongs to the ammonium transporter (TC 2.A.49) family. Rh subfamily.</text>
</comment>
<accession>Q8WMW0</accession>
<feature type="chain" id="PRO_0000283603" description="Ammonium transporter Rh type B">
    <location>
        <begin position="1"/>
        <end position="471"/>
    </location>
</feature>
<feature type="topological domain" description="Cytoplasmic" evidence="3">
    <location>
        <begin position="1"/>
        <end position="13"/>
    </location>
</feature>
<feature type="transmembrane region" description="Helical" evidence="3">
    <location>
        <begin position="14"/>
        <end position="33"/>
    </location>
</feature>
<feature type="topological domain" description="Extracellular" evidence="3">
    <location>
        <begin position="34"/>
        <end position="60"/>
    </location>
</feature>
<feature type="transmembrane region" description="Helical" evidence="3">
    <location>
        <begin position="61"/>
        <end position="81"/>
    </location>
</feature>
<feature type="topological domain" description="Cytoplasmic" evidence="3">
    <location>
        <begin position="82"/>
        <end position="85"/>
    </location>
</feature>
<feature type="transmembrane region" description="Helical" evidence="3">
    <location>
        <begin position="86"/>
        <end position="106"/>
    </location>
</feature>
<feature type="topological domain" description="Extracellular" evidence="3">
    <location>
        <begin position="107"/>
        <end position="123"/>
    </location>
</feature>
<feature type="transmembrane region" description="Helical" evidence="3">
    <location>
        <begin position="124"/>
        <end position="144"/>
    </location>
</feature>
<feature type="topological domain" description="Cytoplasmic" evidence="3">
    <location>
        <begin position="145"/>
        <end position="148"/>
    </location>
</feature>
<feature type="transmembrane region" description="Helical" evidence="3">
    <location>
        <begin position="149"/>
        <end position="169"/>
    </location>
</feature>
<feature type="topological domain" description="Extracellular" evidence="3">
    <location>
        <begin position="170"/>
        <end position="177"/>
    </location>
</feature>
<feature type="transmembrane region" description="Helical" evidence="3">
    <location>
        <begin position="178"/>
        <end position="200"/>
    </location>
</feature>
<feature type="topological domain" description="Cytoplasmic" evidence="3">
    <location>
        <begin position="201"/>
        <end position="217"/>
    </location>
</feature>
<feature type="transmembrane region" description="Helical" evidence="3">
    <location>
        <begin position="218"/>
        <end position="238"/>
    </location>
</feature>
<feature type="topological domain" description="Extracellular" evidence="3">
    <location>
        <begin position="239"/>
        <end position="249"/>
    </location>
</feature>
<feature type="transmembrane region" description="Helical" evidence="3">
    <location>
        <begin position="250"/>
        <end position="270"/>
    </location>
</feature>
<feature type="topological domain" description="Cytoplasmic" evidence="3">
    <location>
        <begin position="271"/>
        <end position="280"/>
    </location>
</feature>
<feature type="transmembrane region" description="Helical" evidence="3">
    <location>
        <begin position="281"/>
        <end position="301"/>
    </location>
</feature>
<feature type="topological domain" description="Extracellular" evidence="3">
    <location>
        <position position="302"/>
    </location>
</feature>
<feature type="transmembrane region" description="Helical" evidence="3">
    <location>
        <begin position="303"/>
        <end position="323"/>
    </location>
</feature>
<feature type="topological domain" description="Cytoplasmic" evidence="3">
    <location>
        <begin position="324"/>
        <end position="344"/>
    </location>
</feature>
<feature type="transmembrane region" description="Helical" evidence="3">
    <location>
        <begin position="345"/>
        <end position="365"/>
    </location>
</feature>
<feature type="topological domain" description="Extracellular" evidence="3">
    <location>
        <begin position="366"/>
        <end position="391"/>
    </location>
</feature>
<feature type="transmembrane region" description="Helical" evidence="3">
    <location>
        <begin position="392"/>
        <end position="412"/>
    </location>
</feature>
<feature type="topological domain" description="Cytoplasmic" evidence="3">
    <location>
        <begin position="413"/>
        <end position="471"/>
    </location>
</feature>
<feature type="region of interest" description="Interaction with ANK3" evidence="1">
    <location>
        <begin position="414"/>
        <end position="422"/>
    </location>
</feature>
<feature type="region of interest" description="Disordered" evidence="4">
    <location>
        <begin position="437"/>
        <end position="471"/>
    </location>
</feature>
<feature type="short sequence motif" description="Basolateral sorting signal" evidence="1">
    <location>
        <begin position="427"/>
        <end position="430"/>
    </location>
</feature>
<feature type="compositionally biased region" description="Basic and acidic residues" evidence="4">
    <location>
        <begin position="452"/>
        <end position="471"/>
    </location>
</feature>
<feature type="glycosylation site" description="N-linked (GlcNAc...) asparagine" evidence="3">
    <location>
        <position position="48"/>
    </location>
</feature>
<proteinExistence type="inferred from homology"/>
<name>RHBG_PONPY</name>
<dbReference type="EMBL" id="AY013284">
    <property type="protein sequence ID" value="AAK16204.1"/>
    <property type="molecule type" value="Genomic_DNA"/>
</dbReference>
<dbReference type="EMBL" id="AY013279">
    <property type="protein sequence ID" value="AAK16204.1"/>
    <property type="status" value="JOINED"/>
    <property type="molecule type" value="Genomic_DNA"/>
</dbReference>
<dbReference type="EMBL" id="AY013280">
    <property type="protein sequence ID" value="AAK16204.1"/>
    <property type="status" value="JOINED"/>
    <property type="molecule type" value="Genomic_DNA"/>
</dbReference>
<dbReference type="EMBL" id="AY013281">
    <property type="protein sequence ID" value="AAK16204.1"/>
    <property type="status" value="JOINED"/>
    <property type="molecule type" value="Genomic_DNA"/>
</dbReference>
<dbReference type="EMBL" id="AY013282">
    <property type="protein sequence ID" value="AAK16204.1"/>
    <property type="status" value="JOINED"/>
    <property type="molecule type" value="Genomic_DNA"/>
</dbReference>
<dbReference type="EMBL" id="AY013283">
    <property type="protein sequence ID" value="AAK16204.1"/>
    <property type="status" value="JOINED"/>
    <property type="molecule type" value="Genomic_DNA"/>
</dbReference>
<dbReference type="SMR" id="Q8WMW0"/>
<dbReference type="GlyCosmos" id="Q8WMW0">
    <property type="glycosylation" value="1 site, No reported glycans"/>
</dbReference>
<dbReference type="GO" id="GO:0016323">
    <property type="term" value="C:basolateral plasma membrane"/>
    <property type="evidence" value="ECO:0000250"/>
    <property type="project" value="UniProtKB"/>
</dbReference>
<dbReference type="GO" id="GO:0014731">
    <property type="term" value="C:spectrin-associated cytoskeleton"/>
    <property type="evidence" value="ECO:0000250"/>
    <property type="project" value="UniProtKB"/>
</dbReference>
<dbReference type="GO" id="GO:0008519">
    <property type="term" value="F:ammonium channel activity"/>
    <property type="evidence" value="ECO:0000250"/>
    <property type="project" value="UniProtKB"/>
</dbReference>
<dbReference type="GO" id="GO:0035379">
    <property type="term" value="F:carbon dioxide transmembrane transporter activity"/>
    <property type="evidence" value="ECO:0000250"/>
    <property type="project" value="UniProtKB"/>
</dbReference>
<dbReference type="GO" id="GO:0097272">
    <property type="term" value="P:ammonium homeostasis"/>
    <property type="evidence" value="ECO:0007669"/>
    <property type="project" value="TreeGrafter"/>
</dbReference>
<dbReference type="GO" id="GO:0072488">
    <property type="term" value="P:ammonium transmembrane transport"/>
    <property type="evidence" value="ECO:0000250"/>
    <property type="project" value="UniProtKB"/>
</dbReference>
<dbReference type="FunFam" id="1.10.3430.10:FF:000001">
    <property type="entry name" value="Ammonium transporter Rh type C"/>
    <property type="match status" value="1"/>
</dbReference>
<dbReference type="Gene3D" id="1.10.3430.10">
    <property type="entry name" value="Ammonium transporter AmtB like domains"/>
    <property type="match status" value="1"/>
</dbReference>
<dbReference type="InterPro" id="IPR029020">
    <property type="entry name" value="Ammonium/urea_transptr"/>
</dbReference>
<dbReference type="InterPro" id="IPR024041">
    <property type="entry name" value="NH4_transpt_AmtB-like_dom"/>
</dbReference>
<dbReference type="InterPro" id="IPR002229">
    <property type="entry name" value="RhesusRHD"/>
</dbReference>
<dbReference type="PANTHER" id="PTHR11730">
    <property type="entry name" value="AMMONIUM TRANSPORTER"/>
    <property type="match status" value="1"/>
</dbReference>
<dbReference type="PANTHER" id="PTHR11730:SF42">
    <property type="entry name" value="AMMONIUM TRANSPORTER RH TYPE B"/>
    <property type="match status" value="1"/>
</dbReference>
<dbReference type="Pfam" id="PF00909">
    <property type="entry name" value="Ammonium_transp"/>
    <property type="match status" value="1"/>
</dbReference>
<dbReference type="PRINTS" id="PR00342">
    <property type="entry name" value="RHESUSRHD"/>
</dbReference>
<dbReference type="SUPFAM" id="SSF111352">
    <property type="entry name" value="Ammonium transporter"/>
    <property type="match status" value="1"/>
</dbReference>
<sequence length="471" mass="50776">MAGSPSRAAGRRLQLPLLSFLQGATAVLFAVFVRYNHKTDAALWHRGNHSNADNEFYFRYPSFQDVHAMVFVGFGFLMVFLQRYGFSSVGFTFLLAAFALQWSTLVQGFLHSFHGGHIHVGVESMINADFCAGAVLISFGAVLGKTGPAQLLLMALLEVVLFGINEFVLLHLLGVRDAGGSMTIHTFGAYFGLVLSQVLYRPQLEKSKHRQGLYHSDLFAMIGTIFLWIFWPSFNAALTSLGAGQHRTALNTYYSLAASTLGTFALSALVGEDGRLDMVHIQNAALAGRVVVGTSSEMMLTPFGALAAGFLAGTVSTLGYKFFTPILESKFKVQDTCGVHNLHGMPGVLGVLLGVLVAGLATHEAYGDGLESVFPLIAEGQRSATSQAMYQLFGLFVTLMFASVGGGLGGLLLKLPFLDSPPDSQCYEDQVHWQAPGATLSPLPTPAFQVPGEHEDKAQRPLRVEEADTQA</sequence>
<organism>
    <name type="scientific">Pongo pygmaeus</name>
    <name type="common">Bornean orangutan</name>
    <dbReference type="NCBI Taxonomy" id="9600"/>
    <lineage>
        <taxon>Eukaryota</taxon>
        <taxon>Metazoa</taxon>
        <taxon>Chordata</taxon>
        <taxon>Craniata</taxon>
        <taxon>Vertebrata</taxon>
        <taxon>Euteleostomi</taxon>
        <taxon>Mammalia</taxon>
        <taxon>Eutheria</taxon>
        <taxon>Euarchontoglires</taxon>
        <taxon>Primates</taxon>
        <taxon>Haplorrhini</taxon>
        <taxon>Catarrhini</taxon>
        <taxon>Hominidae</taxon>
        <taxon>Pongo</taxon>
    </lineage>
</organism>
<keyword id="KW-0924">Ammonia transport</keyword>
<keyword id="KW-1003">Cell membrane</keyword>
<keyword id="KW-0325">Glycoprotein</keyword>
<keyword id="KW-0472">Membrane</keyword>
<keyword id="KW-0812">Transmembrane</keyword>
<keyword id="KW-1133">Transmembrane helix</keyword>
<keyword id="KW-0813">Transport</keyword>
<reference key="1">
    <citation type="journal article" date="2005" name="Proc. Natl. Acad. Sci. U.S.A.">
        <title>Evolutionary conservation and diversification of Rh family genes and proteins.</title>
        <authorList>
            <person name="Huang C.-H."/>
            <person name="Peng J."/>
        </authorList>
    </citation>
    <scope>NUCLEOTIDE SEQUENCE [GENOMIC DNA]</scope>
</reference>
<evidence type="ECO:0000250" key="1"/>
<evidence type="ECO:0000250" key="2">
    <source>
        <dbReference type="UniProtKB" id="Q9H310"/>
    </source>
</evidence>
<evidence type="ECO:0000255" key="3"/>
<evidence type="ECO:0000256" key="4">
    <source>
        <dbReference type="SAM" id="MobiDB-lite"/>
    </source>
</evidence>
<evidence type="ECO:0000305" key="5"/>